<comment type="function">
    <text evidence="1">Specifically methylates the pseudouridine at position 1915 (m3Psi1915) in 23S rRNA.</text>
</comment>
<comment type="catalytic activity">
    <reaction evidence="1">
        <text>pseudouridine(1915) in 23S rRNA + S-adenosyl-L-methionine = N(3)-methylpseudouridine(1915) in 23S rRNA + S-adenosyl-L-homocysteine + H(+)</text>
        <dbReference type="Rhea" id="RHEA:42752"/>
        <dbReference type="Rhea" id="RHEA-COMP:10221"/>
        <dbReference type="Rhea" id="RHEA-COMP:10222"/>
        <dbReference type="ChEBI" id="CHEBI:15378"/>
        <dbReference type="ChEBI" id="CHEBI:57856"/>
        <dbReference type="ChEBI" id="CHEBI:59789"/>
        <dbReference type="ChEBI" id="CHEBI:65314"/>
        <dbReference type="ChEBI" id="CHEBI:74486"/>
        <dbReference type="EC" id="2.1.1.177"/>
    </reaction>
</comment>
<comment type="subunit">
    <text evidence="1">Homodimer.</text>
</comment>
<comment type="subcellular location">
    <subcellularLocation>
        <location evidence="1">Cytoplasm</location>
    </subcellularLocation>
</comment>
<comment type="similarity">
    <text evidence="1">Belongs to the RNA methyltransferase RlmH family.</text>
</comment>
<protein>
    <recommendedName>
        <fullName evidence="1">Ribosomal RNA large subunit methyltransferase H</fullName>
        <ecNumber evidence="1">2.1.1.177</ecNumber>
    </recommendedName>
    <alternativeName>
        <fullName evidence="1">23S rRNA (pseudouridine1915-N3)-methyltransferase</fullName>
    </alternativeName>
    <alternativeName>
        <fullName evidence="1">23S rRNA m3Psi1915 methyltransferase</fullName>
    </alternativeName>
    <alternativeName>
        <fullName evidence="1">rRNA (pseudouridine-N3-)-methyltransferase RlmH</fullName>
    </alternativeName>
</protein>
<sequence>MRVSVFAVGRMKSGPKRELVERYFDRFAKAGPPLGLEFAGVSEIPESRGQTAQLRKAEEAQRIHEALDNAKSGGTSSGGAALILLDERGKALGSEAFAAIVGRMRDDGKRQLIVAIGGPDGHDPALRSRADLVLALGELTWPHQIARILIAEQLYRAATILAGHPYHRS</sequence>
<keyword id="KW-0963">Cytoplasm</keyword>
<keyword id="KW-0489">Methyltransferase</keyword>
<keyword id="KW-0698">rRNA processing</keyword>
<keyword id="KW-0949">S-adenosyl-L-methionine</keyword>
<keyword id="KW-0808">Transferase</keyword>
<feature type="chain" id="PRO_1000061761" description="Ribosomal RNA large subunit methyltransferase H">
    <location>
        <begin position="1"/>
        <end position="169"/>
    </location>
</feature>
<feature type="binding site" evidence="1">
    <location>
        <position position="85"/>
    </location>
    <ligand>
        <name>S-adenosyl-L-methionine</name>
        <dbReference type="ChEBI" id="CHEBI:59789"/>
    </ligand>
</feature>
<feature type="binding site" evidence="1">
    <location>
        <position position="117"/>
    </location>
    <ligand>
        <name>S-adenosyl-L-methionine</name>
        <dbReference type="ChEBI" id="CHEBI:59789"/>
    </ligand>
</feature>
<feature type="binding site" evidence="1">
    <location>
        <begin position="136"/>
        <end position="141"/>
    </location>
    <ligand>
        <name>S-adenosyl-L-methionine</name>
        <dbReference type="ChEBI" id="CHEBI:59789"/>
    </ligand>
</feature>
<accession>A5VSI0</accession>
<dbReference type="EC" id="2.1.1.177" evidence="1"/>
<dbReference type="EMBL" id="CP000708">
    <property type="protein sequence ID" value="ABQ61006.1"/>
    <property type="molecule type" value="Genomic_DNA"/>
</dbReference>
<dbReference type="RefSeq" id="WP_006013823.1">
    <property type="nucleotide sequence ID" value="NC_009505.1"/>
</dbReference>
<dbReference type="SMR" id="A5VSI0"/>
<dbReference type="GeneID" id="45125120"/>
<dbReference type="KEGG" id="bov:BOV_1773"/>
<dbReference type="HOGENOM" id="CLU_100552_1_1_5"/>
<dbReference type="PhylomeDB" id="A5VSI0"/>
<dbReference type="Proteomes" id="UP000006383">
    <property type="component" value="Chromosome I"/>
</dbReference>
<dbReference type="GO" id="GO:0005737">
    <property type="term" value="C:cytoplasm"/>
    <property type="evidence" value="ECO:0007669"/>
    <property type="project" value="UniProtKB-SubCell"/>
</dbReference>
<dbReference type="GO" id="GO:0070038">
    <property type="term" value="F:rRNA (pseudouridine-N3-)-methyltransferase activity"/>
    <property type="evidence" value="ECO:0007669"/>
    <property type="project" value="UniProtKB-UniRule"/>
</dbReference>
<dbReference type="CDD" id="cd18081">
    <property type="entry name" value="RlmH-like"/>
    <property type="match status" value="1"/>
</dbReference>
<dbReference type="Gene3D" id="3.40.1280.10">
    <property type="match status" value="1"/>
</dbReference>
<dbReference type="HAMAP" id="MF_00658">
    <property type="entry name" value="23SrRNA_methyltr_H"/>
    <property type="match status" value="1"/>
</dbReference>
<dbReference type="InterPro" id="IPR029028">
    <property type="entry name" value="Alpha/beta_knot_MTases"/>
</dbReference>
<dbReference type="InterPro" id="IPR003742">
    <property type="entry name" value="RlmH-like"/>
</dbReference>
<dbReference type="InterPro" id="IPR029026">
    <property type="entry name" value="tRNA_m1G_MTases_N"/>
</dbReference>
<dbReference type="NCBIfam" id="NF000989">
    <property type="entry name" value="PRK00103.2-3"/>
    <property type="match status" value="1"/>
</dbReference>
<dbReference type="PANTHER" id="PTHR33603">
    <property type="entry name" value="METHYLTRANSFERASE"/>
    <property type="match status" value="1"/>
</dbReference>
<dbReference type="PANTHER" id="PTHR33603:SF1">
    <property type="entry name" value="RIBOSOMAL RNA LARGE SUBUNIT METHYLTRANSFERASE H"/>
    <property type="match status" value="1"/>
</dbReference>
<dbReference type="Pfam" id="PF02590">
    <property type="entry name" value="SPOUT_MTase"/>
    <property type="match status" value="1"/>
</dbReference>
<dbReference type="PIRSF" id="PIRSF004505">
    <property type="entry name" value="MT_bac"/>
    <property type="match status" value="1"/>
</dbReference>
<dbReference type="SUPFAM" id="SSF75217">
    <property type="entry name" value="alpha/beta knot"/>
    <property type="match status" value="1"/>
</dbReference>
<gene>
    <name evidence="1" type="primary">rlmH</name>
    <name type="ordered locus">BOV_1773</name>
</gene>
<organism>
    <name type="scientific">Brucella ovis (strain ATCC 25840 / 63/290 / NCTC 10512)</name>
    <dbReference type="NCBI Taxonomy" id="444178"/>
    <lineage>
        <taxon>Bacteria</taxon>
        <taxon>Pseudomonadati</taxon>
        <taxon>Pseudomonadota</taxon>
        <taxon>Alphaproteobacteria</taxon>
        <taxon>Hyphomicrobiales</taxon>
        <taxon>Brucellaceae</taxon>
        <taxon>Brucella/Ochrobactrum group</taxon>
        <taxon>Brucella</taxon>
    </lineage>
</organism>
<reference key="1">
    <citation type="journal article" date="2009" name="PLoS ONE">
        <title>Genome degradation in Brucella ovis corresponds with narrowing of its host range and tissue tropism.</title>
        <authorList>
            <person name="Tsolis R.M."/>
            <person name="Seshadri R."/>
            <person name="Santos R.L."/>
            <person name="Sangari F.J."/>
            <person name="Lobo J.M."/>
            <person name="de Jong M.F."/>
            <person name="Ren Q."/>
            <person name="Myers G."/>
            <person name="Brinkac L.M."/>
            <person name="Nelson W.C."/>
            <person name="Deboy R.T."/>
            <person name="Angiuoli S."/>
            <person name="Khouri H."/>
            <person name="Dimitrov G."/>
            <person name="Robinson J.R."/>
            <person name="Mulligan S."/>
            <person name="Walker R.L."/>
            <person name="Elzer P.E."/>
            <person name="Hassan K.A."/>
            <person name="Paulsen I.T."/>
        </authorList>
    </citation>
    <scope>NUCLEOTIDE SEQUENCE [LARGE SCALE GENOMIC DNA]</scope>
    <source>
        <strain>ATCC 25840 / 63/290 / NCTC 10512</strain>
    </source>
</reference>
<evidence type="ECO:0000255" key="1">
    <source>
        <dbReference type="HAMAP-Rule" id="MF_00658"/>
    </source>
</evidence>
<name>RLMH_BRUO2</name>
<proteinExistence type="inferred from homology"/>